<gene>
    <name type="primary">RKM5</name>
    <name type="ORF">EC1118_1L10_2223g</name>
</gene>
<accession>C8ZDA6</accession>
<proteinExistence type="inferred from homology"/>
<sequence>MAFKLWLLDEETIYEHVFERYTQLEGQSGKLAQDLGIQDRRGGVLEITFEPSGLEGGRKKKRVRRRNKASSVEEDQNVAVDSYHVSVGQSISSLHSSRDNGNSTTGYVLWSTTPFFINWLLYSTSAAPFRLGSQVEVTCGSSCEGHMLELPRLIDLTGADRGKRGILELGAGISGILPVILGNFVDTYVSTDQKGILNKLKDNIMENLSQLTRKRCISRSLRLELPTVEPVGDADITAASLPSKSTLHLEVAALDWEKINLQDKKTHSLHPELSLIGETCSSVYVIAMDVIYNEYLIDPFLKTLKQLKHWLQTTYNLQFHVLVGIHLRSQEVTTLFLEKAIIEYDFTVYDIVDQVIQESRFNFYLIT</sequence>
<dbReference type="EC" id="2.1.1.-" evidence="1"/>
<dbReference type="EMBL" id="FN393078">
    <property type="protein sequence ID" value="CAY81372.1"/>
    <property type="molecule type" value="Genomic_DNA"/>
</dbReference>
<dbReference type="SMR" id="C8ZDA6"/>
<dbReference type="HOGENOM" id="CLU_051532_0_0_1"/>
<dbReference type="OrthoDB" id="5600at4893"/>
<dbReference type="Proteomes" id="UP000000286">
    <property type="component" value="Chromosome XII, Scaffold EC1118_1L10"/>
</dbReference>
<dbReference type="GO" id="GO:0005829">
    <property type="term" value="C:cytosol"/>
    <property type="evidence" value="ECO:0007669"/>
    <property type="project" value="TreeGrafter"/>
</dbReference>
<dbReference type="GO" id="GO:0032991">
    <property type="term" value="C:protein-containing complex"/>
    <property type="evidence" value="ECO:0007669"/>
    <property type="project" value="TreeGrafter"/>
</dbReference>
<dbReference type="GO" id="GO:0008757">
    <property type="term" value="F:S-adenosylmethionine-dependent methyltransferase activity"/>
    <property type="evidence" value="ECO:0007669"/>
    <property type="project" value="UniProtKB-ARBA"/>
</dbReference>
<dbReference type="GO" id="GO:0032259">
    <property type="term" value="P:methylation"/>
    <property type="evidence" value="ECO:0007669"/>
    <property type="project" value="UniProtKB-KW"/>
</dbReference>
<dbReference type="Gene3D" id="3.40.50.150">
    <property type="entry name" value="Vaccinia Virus protein VP39"/>
    <property type="match status" value="1"/>
</dbReference>
<dbReference type="InterPro" id="IPR019410">
    <property type="entry name" value="Methyltransf_16"/>
</dbReference>
<dbReference type="InterPro" id="IPR029063">
    <property type="entry name" value="SAM-dependent_MTases_sf"/>
</dbReference>
<dbReference type="PANTHER" id="PTHR14614">
    <property type="entry name" value="HEPATOCELLULAR CARCINOMA-ASSOCIATED ANTIGEN"/>
    <property type="match status" value="1"/>
</dbReference>
<dbReference type="PANTHER" id="PTHR14614:SF109">
    <property type="entry name" value="RIBOSOMAL LYSINE N-METHYLTRANSFERASE 5"/>
    <property type="match status" value="1"/>
</dbReference>
<name>RKM5_YEAS8</name>
<protein>
    <recommendedName>
        <fullName evidence="1">Ribosomal lysine N-methyltransferase 5</fullName>
        <ecNumber evidence="1">2.1.1.-</ecNumber>
    </recommendedName>
</protein>
<feature type="chain" id="PRO_0000411049" description="Ribosomal lysine N-methyltransferase 5">
    <location>
        <begin position="1"/>
        <end position="367"/>
    </location>
</feature>
<feature type="region of interest" description="Disordered" evidence="3">
    <location>
        <begin position="55"/>
        <end position="74"/>
    </location>
</feature>
<feature type="compositionally biased region" description="Basic residues" evidence="3">
    <location>
        <begin position="58"/>
        <end position="68"/>
    </location>
</feature>
<feature type="binding site" evidence="2">
    <location>
        <position position="110"/>
    </location>
    <ligand>
        <name>S-adenosyl-L-methionine</name>
        <dbReference type="ChEBI" id="CHEBI:59789"/>
    </ligand>
</feature>
<feature type="binding site" evidence="2">
    <location>
        <begin position="170"/>
        <end position="172"/>
    </location>
    <ligand>
        <name>S-adenosyl-L-methionine</name>
        <dbReference type="ChEBI" id="CHEBI:59789"/>
    </ligand>
</feature>
<feature type="binding site" evidence="2">
    <location>
        <position position="192"/>
    </location>
    <ligand>
        <name>S-adenosyl-L-methionine</name>
        <dbReference type="ChEBI" id="CHEBI:59789"/>
    </ligand>
</feature>
<feature type="binding site" evidence="2">
    <location>
        <position position="256"/>
    </location>
    <ligand>
        <name>S-adenosyl-L-methionine</name>
        <dbReference type="ChEBI" id="CHEBI:59789"/>
    </ligand>
</feature>
<feature type="binding site" evidence="2">
    <location>
        <position position="288"/>
    </location>
    <ligand>
        <name>S-adenosyl-L-methionine</name>
        <dbReference type="ChEBI" id="CHEBI:59789"/>
    </ligand>
</feature>
<evidence type="ECO:0000250" key="1">
    <source>
        <dbReference type="UniProtKB" id="Q12367"/>
    </source>
</evidence>
<evidence type="ECO:0000250" key="2">
    <source>
        <dbReference type="UniProtKB" id="Q9H867"/>
    </source>
</evidence>
<evidence type="ECO:0000256" key="3">
    <source>
        <dbReference type="SAM" id="MobiDB-lite"/>
    </source>
</evidence>
<evidence type="ECO:0000305" key="4"/>
<keyword id="KW-0489">Methyltransferase</keyword>
<keyword id="KW-0949">S-adenosyl-L-methionine</keyword>
<keyword id="KW-0808">Transferase</keyword>
<comment type="function">
    <text evidence="1">S-adenosyl-L-methionine-dependent protein-lysine N-methyltransferase that monomethylates 60S ribosomal protein L1 (RPL1A and RPL1B) at 'Lys-46'.</text>
</comment>
<comment type="similarity">
    <text evidence="4">Belongs to the class I-like SAM-binding methyltransferase superfamily. RKM5 family.</text>
</comment>
<reference key="1">
    <citation type="journal article" date="2009" name="Proc. Natl. Acad. Sci. U.S.A.">
        <title>Eukaryote-to-eukaryote gene transfer events revealed by the genome sequence of the wine yeast Saccharomyces cerevisiae EC1118.</title>
        <authorList>
            <person name="Novo M."/>
            <person name="Bigey F."/>
            <person name="Beyne E."/>
            <person name="Galeote V."/>
            <person name="Gavory F."/>
            <person name="Mallet S."/>
            <person name="Cambon B."/>
            <person name="Legras J.-L."/>
            <person name="Wincker P."/>
            <person name="Casaregola S."/>
            <person name="Dequin S."/>
        </authorList>
    </citation>
    <scope>NUCLEOTIDE SEQUENCE [LARGE SCALE GENOMIC DNA]</scope>
    <source>
        <strain>Lalvin EC1118 / Prise de mousse</strain>
    </source>
</reference>
<organism>
    <name type="scientific">Saccharomyces cerevisiae (strain Lalvin EC1118 / Prise de mousse)</name>
    <name type="common">Baker's yeast</name>
    <dbReference type="NCBI Taxonomy" id="643680"/>
    <lineage>
        <taxon>Eukaryota</taxon>
        <taxon>Fungi</taxon>
        <taxon>Dikarya</taxon>
        <taxon>Ascomycota</taxon>
        <taxon>Saccharomycotina</taxon>
        <taxon>Saccharomycetes</taxon>
        <taxon>Saccharomycetales</taxon>
        <taxon>Saccharomycetaceae</taxon>
        <taxon>Saccharomyces</taxon>
    </lineage>
</organism>